<feature type="chain" id="PRO_0000131778" description="Protein translocase subunit SecY">
    <location>
        <begin position="1"/>
        <end position="411"/>
    </location>
</feature>
<feature type="transmembrane region" description="Helical" evidence="2">
    <location>
        <begin position="13"/>
        <end position="33"/>
    </location>
</feature>
<feature type="transmembrane region" description="Helical" evidence="2">
    <location>
        <begin position="52"/>
        <end position="72"/>
    </location>
</feature>
<feature type="transmembrane region" description="Helical" evidence="2">
    <location>
        <begin position="111"/>
        <end position="131"/>
    </location>
</feature>
<feature type="transmembrane region" description="Helical" evidence="2">
    <location>
        <begin position="135"/>
        <end position="155"/>
    </location>
</feature>
<feature type="transmembrane region" description="Helical" evidence="2">
    <location>
        <begin position="163"/>
        <end position="180"/>
    </location>
</feature>
<feature type="transmembrane region" description="Helical" evidence="2">
    <location>
        <begin position="197"/>
        <end position="217"/>
    </location>
</feature>
<feature type="transmembrane region" description="Helical" evidence="2">
    <location>
        <begin position="252"/>
        <end position="272"/>
    </location>
</feature>
<feature type="transmembrane region" description="Helical" evidence="2">
    <location>
        <begin position="291"/>
        <end position="311"/>
    </location>
</feature>
<feature type="transmembrane region" description="Helical" evidence="2">
    <location>
        <begin position="350"/>
        <end position="370"/>
    </location>
</feature>
<feature type="transmembrane region" description="Helical" evidence="2">
    <location>
        <begin position="377"/>
        <end position="397"/>
    </location>
</feature>
<name>SECY_PORPU</name>
<evidence type="ECO:0000250" key="1"/>
<evidence type="ECO:0000255" key="2">
    <source>
        <dbReference type="HAMAP-Rule" id="MF_01465"/>
    </source>
</evidence>
<dbReference type="EMBL" id="U38804">
    <property type="protein sequence ID" value="AAC08183.1"/>
    <property type="molecule type" value="Genomic_DNA"/>
</dbReference>
<dbReference type="PIR" id="S73218">
    <property type="entry name" value="S73218"/>
</dbReference>
<dbReference type="RefSeq" id="NP_053907.1">
    <property type="nucleotide sequence ID" value="NC_000925.1"/>
</dbReference>
<dbReference type="SMR" id="P51297"/>
<dbReference type="GeneID" id="809926"/>
<dbReference type="GO" id="GO:0009535">
    <property type="term" value="C:chloroplast thylakoid membrane"/>
    <property type="evidence" value="ECO:0007669"/>
    <property type="project" value="UniProtKB-SubCell"/>
</dbReference>
<dbReference type="GO" id="GO:0065002">
    <property type="term" value="P:intracellular protein transmembrane transport"/>
    <property type="evidence" value="ECO:0007669"/>
    <property type="project" value="UniProtKB-UniRule"/>
</dbReference>
<dbReference type="GO" id="GO:0006605">
    <property type="term" value="P:protein targeting"/>
    <property type="evidence" value="ECO:0007669"/>
    <property type="project" value="UniProtKB-UniRule"/>
</dbReference>
<dbReference type="FunFam" id="1.10.3370.10:FF:000001">
    <property type="entry name" value="Preprotein translocase subunit SecY"/>
    <property type="match status" value="1"/>
</dbReference>
<dbReference type="Gene3D" id="1.10.3370.10">
    <property type="entry name" value="SecY subunit domain"/>
    <property type="match status" value="1"/>
</dbReference>
<dbReference type="HAMAP" id="MF_01465">
    <property type="entry name" value="SecY"/>
    <property type="match status" value="1"/>
</dbReference>
<dbReference type="InterPro" id="IPR026593">
    <property type="entry name" value="SecY"/>
</dbReference>
<dbReference type="InterPro" id="IPR002208">
    <property type="entry name" value="SecY/SEC61-alpha"/>
</dbReference>
<dbReference type="InterPro" id="IPR030659">
    <property type="entry name" value="SecY_CS"/>
</dbReference>
<dbReference type="InterPro" id="IPR023201">
    <property type="entry name" value="SecY_dom_sf"/>
</dbReference>
<dbReference type="NCBIfam" id="TIGR00967">
    <property type="entry name" value="3a0501s007"/>
    <property type="match status" value="1"/>
</dbReference>
<dbReference type="PANTHER" id="PTHR10906">
    <property type="entry name" value="SECY/SEC61-ALPHA FAMILY MEMBER"/>
    <property type="match status" value="1"/>
</dbReference>
<dbReference type="Pfam" id="PF00344">
    <property type="entry name" value="SecY"/>
    <property type="match status" value="1"/>
</dbReference>
<dbReference type="PIRSF" id="PIRSF004557">
    <property type="entry name" value="SecY"/>
    <property type="match status" value="1"/>
</dbReference>
<dbReference type="PRINTS" id="PR00303">
    <property type="entry name" value="SECYTRNLCASE"/>
</dbReference>
<dbReference type="SUPFAM" id="SSF103491">
    <property type="entry name" value="Preprotein translocase SecY subunit"/>
    <property type="match status" value="1"/>
</dbReference>
<dbReference type="PROSITE" id="PS00755">
    <property type="entry name" value="SECY_1"/>
    <property type="match status" value="1"/>
</dbReference>
<dbReference type="PROSITE" id="PS00756">
    <property type="entry name" value="SECY_2"/>
    <property type="match status" value="1"/>
</dbReference>
<organism>
    <name type="scientific">Porphyra purpurea</name>
    <name type="common">Red seaweed</name>
    <name type="synonym">Ulva purpurea</name>
    <dbReference type="NCBI Taxonomy" id="2787"/>
    <lineage>
        <taxon>Eukaryota</taxon>
        <taxon>Rhodophyta</taxon>
        <taxon>Bangiophyceae</taxon>
        <taxon>Bangiales</taxon>
        <taxon>Bangiaceae</taxon>
        <taxon>Porphyra</taxon>
    </lineage>
</organism>
<accession>P51297</accession>
<sequence length="411" mass="45660">MSQKSDLRNRIKFTLLLLVLARLGIFIPVPGIDHDAFYASVEKNTLVNFLNIFSGGGFSTIGIFALGIVPYINSSIVMQLLTKIIPDLEKLQKEEGELGRQKITQITRYLALGWATLQSGAISIWVKPYVFNWNFTFVCESVLALTAGSMIIMWLSELITEKGIGNGASLLIFQNIVSGLPKNFTQSFFDANYSNTSIKFGLFIVIFLLMIIITIFVQEGTRRIKIISARQLGKSSILDPNSYLPLKLNQGGVMPIVFASASMALPAYLTQLTQNTFLLQVLYLFCPNGSLYLVLYSVLILFFSYFYTSIVMNPEDIATNLKKMGASIPNIRPGQATIDYLQVILNRLTFLGATFLFTVALIPFIIEKVAQIQNLRGLGATSLLILVGVAIDTAKQIQTYVISKKYDSMTK</sequence>
<keyword id="KW-0150">Chloroplast</keyword>
<keyword id="KW-0472">Membrane</keyword>
<keyword id="KW-0934">Plastid</keyword>
<keyword id="KW-0653">Protein transport</keyword>
<keyword id="KW-0793">Thylakoid</keyword>
<keyword id="KW-0811">Translocation</keyword>
<keyword id="KW-0812">Transmembrane</keyword>
<keyword id="KW-1133">Transmembrane helix</keyword>
<keyword id="KW-0813">Transport</keyword>
<comment type="function">
    <text evidence="2">The central subunit of the protein translocation channel SecYE. Consists of two halves formed by TMs 1-5 and 6-10. These two domains form a lateral gate at the front which open onto the bilayer between TMs 2 and 7, and are clamped together by SecE at the back. The channel is closed by both a pore ring composed of hydrophobic SecY resides and a short helix (helix 2A) on the extracellular side of the membrane which forms a plug.</text>
</comment>
<comment type="subunit">
    <text evidence="1">Component of the plastid Sec protein translocase complex, which is composed of at least SecY, SecE and SecG.</text>
</comment>
<comment type="subcellular location">
    <subcellularLocation>
        <location evidence="2">Plastid</location>
        <location evidence="2">Chloroplast thylakoid membrane</location>
        <topology evidence="2">Multi-pass membrane protein</topology>
    </subcellularLocation>
</comment>
<comment type="similarity">
    <text evidence="2">Belongs to the SecY/SEC61-alpha family.</text>
</comment>
<proteinExistence type="inferred from homology"/>
<reference key="1">
    <citation type="journal article" date="1995" name="Plant Mol. Biol. Rep.">
        <title>Complete nucleotide sequence of the Porphyra purpurea chloroplast genome.</title>
        <authorList>
            <person name="Reith M.E."/>
            <person name="Munholland J."/>
        </authorList>
    </citation>
    <scope>NUCLEOTIDE SEQUENCE [LARGE SCALE GENOMIC DNA]</scope>
    <source>
        <strain>Avonport</strain>
    </source>
</reference>
<protein>
    <recommendedName>
        <fullName evidence="2">Protein translocase subunit SecY</fullName>
    </recommendedName>
</protein>
<geneLocation type="chloroplast"/>
<gene>
    <name evidence="2" type="primary">secY</name>
</gene>